<dbReference type="EC" id="6.2.1.20"/>
<dbReference type="EMBL" id="EF093797">
    <property type="protein sequence ID" value="ABK88270.1"/>
    <property type="molecule type" value="mRNA"/>
</dbReference>
<dbReference type="EMBL" id="Z97335">
    <property type="protein sequence ID" value="CAB10186.1"/>
    <property type="status" value="ALT_SEQ"/>
    <property type="molecule type" value="Genomic_DNA"/>
</dbReference>
<dbReference type="EMBL" id="AL161538">
    <property type="protein sequence ID" value="CAB78449.1"/>
    <property type="status" value="ALT_SEQ"/>
    <property type="molecule type" value="Genomic_DNA"/>
</dbReference>
<dbReference type="EMBL" id="CP002687">
    <property type="protein sequence ID" value="AEE83367.1"/>
    <property type="molecule type" value="Genomic_DNA"/>
</dbReference>
<dbReference type="EMBL" id="AY062804">
    <property type="protein sequence ID" value="AAL32882.1"/>
    <property type="molecule type" value="mRNA"/>
</dbReference>
<dbReference type="EMBL" id="BT010332">
    <property type="protein sequence ID" value="AAQ56775.1"/>
    <property type="molecule type" value="mRNA"/>
</dbReference>
<dbReference type="EMBL" id="AF503770">
    <property type="protein sequence ID" value="AAM28628.1"/>
    <property type="molecule type" value="mRNA"/>
</dbReference>
<dbReference type="EMBL" id="AK221841">
    <property type="protein sequence ID" value="BAD94085.1"/>
    <property type="status" value="ALT_INIT"/>
    <property type="molecule type" value="mRNA"/>
</dbReference>
<dbReference type="PIR" id="H71401">
    <property type="entry name" value="H71401"/>
</dbReference>
<dbReference type="RefSeq" id="NP_193143.2">
    <property type="nucleotide sequence ID" value="NM_117482.4"/>
</dbReference>
<dbReference type="FunCoup" id="Q8W471">
    <property type="interactions" value="553"/>
</dbReference>
<dbReference type="STRING" id="3702.Q8W471"/>
<dbReference type="iPTMnet" id="Q8W471"/>
<dbReference type="PaxDb" id="3702-AT4G14070.1"/>
<dbReference type="ProMEX" id="Q8W471"/>
<dbReference type="ProteomicsDB" id="245131"/>
<dbReference type="EnsemblPlants" id="AT4G14070.1">
    <property type="protein sequence ID" value="AT4G14070.1"/>
    <property type="gene ID" value="AT4G14070"/>
</dbReference>
<dbReference type="GeneID" id="827043"/>
<dbReference type="Gramene" id="AT4G14070.1">
    <property type="protein sequence ID" value="AT4G14070.1"/>
    <property type="gene ID" value="AT4G14070"/>
</dbReference>
<dbReference type="KEGG" id="ath:AT4G14070"/>
<dbReference type="Araport" id="AT4G14070"/>
<dbReference type="TAIR" id="AT4G14070">
    <property type="gene designation" value="AAE15"/>
</dbReference>
<dbReference type="eggNOG" id="KOG1256">
    <property type="taxonomic scope" value="Eukaryota"/>
</dbReference>
<dbReference type="HOGENOM" id="CLU_000022_45_5_1"/>
<dbReference type="InParanoid" id="Q8W471"/>
<dbReference type="OMA" id="PIHVDKF"/>
<dbReference type="PhylomeDB" id="Q8W471"/>
<dbReference type="BioCyc" id="ARA:AT4G14070-MONOMER"/>
<dbReference type="BRENDA" id="6.2.1.20">
    <property type="organism ID" value="399"/>
</dbReference>
<dbReference type="PRO" id="PR:Q8W471"/>
<dbReference type="Proteomes" id="UP000006548">
    <property type="component" value="Chromosome 4"/>
</dbReference>
<dbReference type="ExpressionAtlas" id="Q8W471">
    <property type="expression patterns" value="baseline and differential"/>
</dbReference>
<dbReference type="GO" id="GO:0009507">
    <property type="term" value="C:chloroplast"/>
    <property type="evidence" value="ECO:0007005"/>
    <property type="project" value="TAIR"/>
</dbReference>
<dbReference type="GO" id="GO:0009941">
    <property type="term" value="C:chloroplast envelope"/>
    <property type="evidence" value="ECO:0007005"/>
    <property type="project" value="TAIR"/>
</dbReference>
<dbReference type="GO" id="GO:0009536">
    <property type="term" value="C:plastid"/>
    <property type="evidence" value="ECO:0000314"/>
    <property type="project" value="TAIR"/>
</dbReference>
<dbReference type="GO" id="GO:0008922">
    <property type="term" value="F:long-chain fatty acid [acyl-carrier-protein] ligase activity"/>
    <property type="evidence" value="ECO:0000315"/>
    <property type="project" value="TAIR"/>
</dbReference>
<dbReference type="GO" id="GO:0006633">
    <property type="term" value="P:fatty acid biosynthetic process"/>
    <property type="evidence" value="ECO:0000315"/>
    <property type="project" value="TAIR"/>
</dbReference>
<dbReference type="GO" id="GO:0030497">
    <property type="term" value="P:fatty acid elongation"/>
    <property type="evidence" value="ECO:0000314"/>
    <property type="project" value="TAIR"/>
</dbReference>
<dbReference type="CDD" id="cd17640">
    <property type="entry name" value="LC_FACS_like"/>
    <property type="match status" value="1"/>
</dbReference>
<dbReference type="Gene3D" id="3.30.300.30">
    <property type="match status" value="1"/>
</dbReference>
<dbReference type="Gene3D" id="3.40.50.980">
    <property type="match status" value="1"/>
</dbReference>
<dbReference type="Gene3D" id="2.30.38.10">
    <property type="entry name" value="Luciferase, Domain 3"/>
    <property type="match status" value="1"/>
</dbReference>
<dbReference type="Gene3D" id="3.40.50.12780">
    <property type="entry name" value="N-terminal domain of ligase-like"/>
    <property type="match status" value="1"/>
</dbReference>
<dbReference type="InterPro" id="IPR045851">
    <property type="entry name" value="AMP-bd_C_sf"/>
</dbReference>
<dbReference type="InterPro" id="IPR020845">
    <property type="entry name" value="AMP-binding_CS"/>
</dbReference>
<dbReference type="InterPro" id="IPR000873">
    <property type="entry name" value="AMP-dep_synth/lig_dom"/>
</dbReference>
<dbReference type="InterPro" id="IPR042099">
    <property type="entry name" value="ANL_N_sf"/>
</dbReference>
<dbReference type="InterPro" id="IPR052987">
    <property type="entry name" value="Chloroplast_AMP-bd_Enzymes"/>
</dbReference>
<dbReference type="PANTHER" id="PTHR43813">
    <property type="entry name" value="ACYL-ACTIVATING ENZYME 16, CHLOROPLASTIC-RELATED"/>
    <property type="match status" value="1"/>
</dbReference>
<dbReference type="PANTHER" id="PTHR43813:SF8">
    <property type="entry name" value="LONG-CHAIN-FATTY-ACID--[ACYL-CARRIER-PROTEIN] LIGASE AEE15, CHLOROPLASTIC"/>
    <property type="match status" value="1"/>
</dbReference>
<dbReference type="Pfam" id="PF00501">
    <property type="entry name" value="AMP-binding"/>
    <property type="match status" value="1"/>
</dbReference>
<dbReference type="Pfam" id="PF23562">
    <property type="entry name" value="AMP-binding_C_3"/>
    <property type="match status" value="1"/>
</dbReference>
<dbReference type="SUPFAM" id="SSF56801">
    <property type="entry name" value="Acetyl-CoA synthetase-like"/>
    <property type="match status" value="1"/>
</dbReference>
<dbReference type="PROSITE" id="PS00455">
    <property type="entry name" value="AMP_BINDING"/>
    <property type="match status" value="1"/>
</dbReference>
<feature type="transit peptide" description="Chloroplast" evidence="2">
    <location>
        <begin position="1"/>
        <end position="66"/>
    </location>
</feature>
<feature type="chain" id="PRO_0000415725" description="Long-chain-fatty-acid--[acyl-carrier-protein] ligase AEE15, chloroplastic">
    <location>
        <begin position="67"/>
        <end position="727"/>
    </location>
</feature>
<feature type="sequence conflict" description="In Ref. 6; AAM28628." evidence="2" ref="6">
    <original>Q</original>
    <variation>L</variation>
    <location>
        <position position="318"/>
    </location>
</feature>
<feature type="sequence conflict" description="In Ref. 6; AAM28628." evidence="2" ref="6">
    <original>G</original>
    <variation>A</variation>
    <location>
        <position position="595"/>
    </location>
</feature>
<accession>Q8W471</accession>
<accession>O23268</accession>
<accession>Q56X36</accession>
<accession>Q8LRT2</accession>
<protein>
    <recommendedName>
        <fullName>Long-chain-fatty-acid--[acyl-carrier-protein] ligase AEE15, chloroplastic</fullName>
        <ecNumber>6.2.1.20</ecNumber>
    </recommendedName>
    <alternativeName>
        <fullName>Acyl-[acyl-carrier-protein] synthetase</fullName>
    </alternativeName>
    <alternativeName>
        <fullName>Acyl-activating enzyme 15</fullName>
    </alternativeName>
</protein>
<gene>
    <name type="primary">AAE15</name>
    <name type="ordered locus">At4g14070</name>
    <name type="ORF">dl3075c</name>
    <name type="ORF">FCAALL.81</name>
</gene>
<keyword id="KW-0150">Chloroplast</keyword>
<keyword id="KW-0276">Fatty acid metabolism</keyword>
<keyword id="KW-0436">Ligase</keyword>
<keyword id="KW-0443">Lipid metabolism</keyword>
<keyword id="KW-0934">Plastid</keyword>
<keyword id="KW-1185">Reference proteome</keyword>
<keyword id="KW-0809">Transit peptide</keyword>
<name>AAE15_ARATH</name>
<organism>
    <name type="scientific">Arabidopsis thaliana</name>
    <name type="common">Mouse-ear cress</name>
    <dbReference type="NCBI Taxonomy" id="3702"/>
    <lineage>
        <taxon>Eukaryota</taxon>
        <taxon>Viridiplantae</taxon>
        <taxon>Streptophyta</taxon>
        <taxon>Embryophyta</taxon>
        <taxon>Tracheophyta</taxon>
        <taxon>Spermatophyta</taxon>
        <taxon>Magnoliopsida</taxon>
        <taxon>eudicotyledons</taxon>
        <taxon>Gunneridae</taxon>
        <taxon>Pentapetalae</taxon>
        <taxon>rosids</taxon>
        <taxon>malvids</taxon>
        <taxon>Brassicales</taxon>
        <taxon>Brassicaceae</taxon>
        <taxon>Camelineae</taxon>
        <taxon>Arabidopsis</taxon>
    </lineage>
</organism>
<proteinExistence type="evidence at protein level"/>
<reference key="1">
    <citation type="journal article" date="2005" name="Plant J.">
        <title>Identification of a plastid acyl-acyl carrier protein synthetase in Arabidopsis and its role in the activation and elongation of exogenous fatty acids.</title>
        <authorList>
            <person name="Koo A.J."/>
            <person name="Fulda M."/>
            <person name="Browse J."/>
            <person name="Ohlrogge J.B."/>
        </authorList>
    </citation>
    <scope>NUCLEOTIDE SEQUENCE [MRNA]</scope>
    <scope>FUNCTION</scope>
    <scope>CATALYTIC ACTIVITY</scope>
</reference>
<reference key="2">
    <citation type="journal article" date="1998" name="Nature">
        <title>Analysis of 1.9 Mb of contiguous sequence from chromosome 4 of Arabidopsis thaliana.</title>
        <authorList>
            <person name="Bevan M."/>
            <person name="Bancroft I."/>
            <person name="Bent E."/>
            <person name="Love K."/>
            <person name="Goodman H.M."/>
            <person name="Dean C."/>
            <person name="Bergkamp R."/>
            <person name="Dirkse W."/>
            <person name="van Staveren M."/>
            <person name="Stiekema W."/>
            <person name="Drost L."/>
            <person name="Ridley P."/>
            <person name="Hudson S.-A."/>
            <person name="Patel K."/>
            <person name="Murphy G."/>
            <person name="Piffanelli P."/>
            <person name="Wedler H."/>
            <person name="Wedler E."/>
            <person name="Wambutt R."/>
            <person name="Weitzenegger T."/>
            <person name="Pohl T."/>
            <person name="Terryn N."/>
            <person name="Gielen J."/>
            <person name="Villarroel R."/>
            <person name="De Clercq R."/>
            <person name="van Montagu M."/>
            <person name="Lecharny A."/>
            <person name="Aubourg S."/>
            <person name="Gy I."/>
            <person name="Kreis M."/>
            <person name="Lao N."/>
            <person name="Kavanagh T."/>
            <person name="Hempel S."/>
            <person name="Kotter P."/>
            <person name="Entian K.-D."/>
            <person name="Rieger M."/>
            <person name="Schaefer M."/>
            <person name="Funk B."/>
            <person name="Mueller-Auer S."/>
            <person name="Silvey M."/>
            <person name="James R."/>
            <person name="Monfort A."/>
            <person name="Pons A."/>
            <person name="Puigdomenech P."/>
            <person name="Douka A."/>
            <person name="Voukelatou E."/>
            <person name="Milioni D."/>
            <person name="Hatzopoulos P."/>
            <person name="Piravandi E."/>
            <person name="Obermaier B."/>
            <person name="Hilbert H."/>
            <person name="Duesterhoeft A."/>
            <person name="Moores T."/>
            <person name="Jones J.D.G."/>
            <person name="Eneva T."/>
            <person name="Palme K."/>
            <person name="Benes V."/>
            <person name="Rechmann S."/>
            <person name="Ansorge W."/>
            <person name="Cooke R."/>
            <person name="Berger C."/>
            <person name="Delseny M."/>
            <person name="Voet M."/>
            <person name="Volckaert G."/>
            <person name="Mewes H.-W."/>
            <person name="Klosterman S."/>
            <person name="Schueller C."/>
            <person name="Chalwatzis N."/>
        </authorList>
    </citation>
    <scope>NUCLEOTIDE SEQUENCE [LARGE SCALE GENOMIC DNA]</scope>
    <source>
        <strain>cv. Columbia</strain>
    </source>
</reference>
<reference key="3">
    <citation type="journal article" date="1999" name="Nature">
        <title>Sequence and analysis of chromosome 4 of the plant Arabidopsis thaliana.</title>
        <authorList>
            <person name="Mayer K.F.X."/>
            <person name="Schueller C."/>
            <person name="Wambutt R."/>
            <person name="Murphy G."/>
            <person name="Volckaert G."/>
            <person name="Pohl T."/>
            <person name="Duesterhoeft A."/>
            <person name="Stiekema W."/>
            <person name="Entian K.-D."/>
            <person name="Terryn N."/>
            <person name="Harris B."/>
            <person name="Ansorge W."/>
            <person name="Brandt P."/>
            <person name="Grivell L.A."/>
            <person name="Rieger M."/>
            <person name="Weichselgartner M."/>
            <person name="de Simone V."/>
            <person name="Obermaier B."/>
            <person name="Mache R."/>
            <person name="Mueller M."/>
            <person name="Kreis M."/>
            <person name="Delseny M."/>
            <person name="Puigdomenech P."/>
            <person name="Watson M."/>
            <person name="Schmidtheini T."/>
            <person name="Reichert B."/>
            <person name="Portetelle D."/>
            <person name="Perez-Alonso M."/>
            <person name="Boutry M."/>
            <person name="Bancroft I."/>
            <person name="Vos P."/>
            <person name="Hoheisel J."/>
            <person name="Zimmermann W."/>
            <person name="Wedler H."/>
            <person name="Ridley P."/>
            <person name="Langham S.-A."/>
            <person name="McCullagh B."/>
            <person name="Bilham L."/>
            <person name="Robben J."/>
            <person name="van der Schueren J."/>
            <person name="Grymonprez B."/>
            <person name="Chuang Y.-J."/>
            <person name="Vandenbussche F."/>
            <person name="Braeken M."/>
            <person name="Weltjens I."/>
            <person name="Voet M."/>
            <person name="Bastiaens I."/>
            <person name="Aert R."/>
            <person name="Defoor E."/>
            <person name="Weitzenegger T."/>
            <person name="Bothe G."/>
            <person name="Ramsperger U."/>
            <person name="Hilbert H."/>
            <person name="Braun M."/>
            <person name="Holzer E."/>
            <person name="Brandt A."/>
            <person name="Peters S."/>
            <person name="van Staveren M."/>
            <person name="Dirkse W."/>
            <person name="Mooijman P."/>
            <person name="Klein Lankhorst R."/>
            <person name="Rose M."/>
            <person name="Hauf J."/>
            <person name="Koetter P."/>
            <person name="Berneiser S."/>
            <person name="Hempel S."/>
            <person name="Feldpausch M."/>
            <person name="Lamberth S."/>
            <person name="Van den Daele H."/>
            <person name="De Keyser A."/>
            <person name="Buysshaert C."/>
            <person name="Gielen J."/>
            <person name="Villarroel R."/>
            <person name="De Clercq R."/>
            <person name="van Montagu M."/>
            <person name="Rogers J."/>
            <person name="Cronin A."/>
            <person name="Quail M.A."/>
            <person name="Bray-Allen S."/>
            <person name="Clark L."/>
            <person name="Doggett J."/>
            <person name="Hall S."/>
            <person name="Kay M."/>
            <person name="Lennard N."/>
            <person name="McLay K."/>
            <person name="Mayes R."/>
            <person name="Pettett A."/>
            <person name="Rajandream M.A."/>
            <person name="Lyne M."/>
            <person name="Benes V."/>
            <person name="Rechmann S."/>
            <person name="Borkova D."/>
            <person name="Bloecker H."/>
            <person name="Scharfe M."/>
            <person name="Grimm M."/>
            <person name="Loehnert T.-H."/>
            <person name="Dose S."/>
            <person name="de Haan M."/>
            <person name="Maarse A.C."/>
            <person name="Schaefer M."/>
            <person name="Mueller-Auer S."/>
            <person name="Gabel C."/>
            <person name="Fuchs M."/>
            <person name="Fartmann B."/>
            <person name="Granderath K."/>
            <person name="Dauner D."/>
            <person name="Herzl A."/>
            <person name="Neumann S."/>
            <person name="Argiriou A."/>
            <person name="Vitale D."/>
            <person name="Liguori R."/>
            <person name="Piravandi E."/>
            <person name="Massenet O."/>
            <person name="Quigley F."/>
            <person name="Clabauld G."/>
            <person name="Muendlein A."/>
            <person name="Felber R."/>
            <person name="Schnabl S."/>
            <person name="Hiller R."/>
            <person name="Schmidt W."/>
            <person name="Lecharny A."/>
            <person name="Aubourg S."/>
            <person name="Chefdor F."/>
            <person name="Cooke R."/>
            <person name="Berger C."/>
            <person name="Monfort A."/>
            <person name="Casacuberta E."/>
            <person name="Gibbons T."/>
            <person name="Weber N."/>
            <person name="Vandenbol M."/>
            <person name="Bargues M."/>
            <person name="Terol J."/>
            <person name="Torres A."/>
            <person name="Perez-Perez A."/>
            <person name="Purnelle B."/>
            <person name="Bent E."/>
            <person name="Johnson S."/>
            <person name="Tacon D."/>
            <person name="Jesse T."/>
            <person name="Heijnen L."/>
            <person name="Schwarz S."/>
            <person name="Scholler P."/>
            <person name="Heber S."/>
            <person name="Francs P."/>
            <person name="Bielke C."/>
            <person name="Frishman D."/>
            <person name="Haase D."/>
            <person name="Lemcke K."/>
            <person name="Mewes H.-W."/>
            <person name="Stocker S."/>
            <person name="Zaccaria P."/>
            <person name="Bevan M."/>
            <person name="Wilson R.K."/>
            <person name="de la Bastide M."/>
            <person name="Habermann K."/>
            <person name="Parnell L."/>
            <person name="Dedhia N."/>
            <person name="Gnoj L."/>
            <person name="Schutz K."/>
            <person name="Huang E."/>
            <person name="Spiegel L."/>
            <person name="Sekhon M."/>
            <person name="Murray J."/>
            <person name="Sheet P."/>
            <person name="Cordes M."/>
            <person name="Abu-Threideh J."/>
            <person name="Stoneking T."/>
            <person name="Kalicki J."/>
            <person name="Graves T."/>
            <person name="Harmon G."/>
            <person name="Edwards J."/>
            <person name="Latreille P."/>
            <person name="Courtney L."/>
            <person name="Cloud J."/>
            <person name="Abbott A."/>
            <person name="Scott K."/>
            <person name="Johnson D."/>
            <person name="Minx P."/>
            <person name="Bentley D."/>
            <person name="Fulton B."/>
            <person name="Miller N."/>
            <person name="Greco T."/>
            <person name="Kemp K."/>
            <person name="Kramer J."/>
            <person name="Fulton L."/>
            <person name="Mardis E."/>
            <person name="Dante M."/>
            <person name="Pepin K."/>
            <person name="Hillier L.W."/>
            <person name="Nelson J."/>
            <person name="Spieth J."/>
            <person name="Ryan E."/>
            <person name="Andrews S."/>
            <person name="Geisel C."/>
            <person name="Layman D."/>
            <person name="Du H."/>
            <person name="Ali J."/>
            <person name="Berghoff A."/>
            <person name="Jones K."/>
            <person name="Drone K."/>
            <person name="Cotton M."/>
            <person name="Joshu C."/>
            <person name="Antonoiu B."/>
            <person name="Zidanic M."/>
            <person name="Strong C."/>
            <person name="Sun H."/>
            <person name="Lamar B."/>
            <person name="Yordan C."/>
            <person name="Ma P."/>
            <person name="Zhong J."/>
            <person name="Preston R."/>
            <person name="Vil D."/>
            <person name="Shekher M."/>
            <person name="Matero A."/>
            <person name="Shah R."/>
            <person name="Swaby I.K."/>
            <person name="O'Shaughnessy A."/>
            <person name="Rodriguez M."/>
            <person name="Hoffman J."/>
            <person name="Till S."/>
            <person name="Granat S."/>
            <person name="Shohdy N."/>
            <person name="Hasegawa A."/>
            <person name="Hameed A."/>
            <person name="Lodhi M."/>
            <person name="Johnson A."/>
            <person name="Chen E."/>
            <person name="Marra M.A."/>
            <person name="Martienssen R."/>
            <person name="McCombie W.R."/>
        </authorList>
    </citation>
    <scope>NUCLEOTIDE SEQUENCE [LARGE SCALE GENOMIC DNA]</scope>
    <source>
        <strain>cv. Columbia</strain>
    </source>
</reference>
<reference key="4">
    <citation type="journal article" date="2017" name="Plant J.">
        <title>Araport11: a complete reannotation of the Arabidopsis thaliana reference genome.</title>
        <authorList>
            <person name="Cheng C.Y."/>
            <person name="Krishnakumar V."/>
            <person name="Chan A.P."/>
            <person name="Thibaud-Nissen F."/>
            <person name="Schobel S."/>
            <person name="Town C.D."/>
        </authorList>
    </citation>
    <scope>GENOME REANNOTATION</scope>
    <source>
        <strain>cv. Columbia</strain>
    </source>
</reference>
<reference key="5">
    <citation type="journal article" date="2003" name="Science">
        <title>Empirical analysis of transcriptional activity in the Arabidopsis genome.</title>
        <authorList>
            <person name="Yamada K."/>
            <person name="Lim J."/>
            <person name="Dale J.M."/>
            <person name="Chen H."/>
            <person name="Shinn P."/>
            <person name="Palm C.J."/>
            <person name="Southwick A.M."/>
            <person name="Wu H.C."/>
            <person name="Kim C.J."/>
            <person name="Nguyen M."/>
            <person name="Pham P.K."/>
            <person name="Cheuk R.F."/>
            <person name="Karlin-Newmann G."/>
            <person name="Liu S.X."/>
            <person name="Lam B."/>
            <person name="Sakano H."/>
            <person name="Wu T."/>
            <person name="Yu G."/>
            <person name="Miranda M."/>
            <person name="Quach H.L."/>
            <person name="Tripp M."/>
            <person name="Chang C.H."/>
            <person name="Lee J.M."/>
            <person name="Toriumi M.J."/>
            <person name="Chan M.M."/>
            <person name="Tang C.C."/>
            <person name="Onodera C.S."/>
            <person name="Deng J.M."/>
            <person name="Akiyama K."/>
            <person name="Ansari Y."/>
            <person name="Arakawa T."/>
            <person name="Banh J."/>
            <person name="Banno F."/>
            <person name="Bowser L."/>
            <person name="Brooks S.Y."/>
            <person name="Carninci P."/>
            <person name="Chao Q."/>
            <person name="Choy N."/>
            <person name="Enju A."/>
            <person name="Goldsmith A.D."/>
            <person name="Gurjal M."/>
            <person name="Hansen N.F."/>
            <person name="Hayashizaki Y."/>
            <person name="Johnson-Hopson C."/>
            <person name="Hsuan V.W."/>
            <person name="Iida K."/>
            <person name="Karnes M."/>
            <person name="Khan S."/>
            <person name="Koesema E."/>
            <person name="Ishida J."/>
            <person name="Jiang P.X."/>
            <person name="Jones T."/>
            <person name="Kawai J."/>
            <person name="Kamiya A."/>
            <person name="Meyers C."/>
            <person name="Nakajima M."/>
            <person name="Narusaka M."/>
            <person name="Seki M."/>
            <person name="Sakurai T."/>
            <person name="Satou M."/>
            <person name="Tamse R."/>
            <person name="Vaysberg M."/>
            <person name="Wallender E.K."/>
            <person name="Wong C."/>
            <person name="Yamamura Y."/>
            <person name="Yuan S."/>
            <person name="Shinozaki K."/>
            <person name="Davis R.W."/>
            <person name="Theologis A."/>
            <person name="Ecker J.R."/>
        </authorList>
    </citation>
    <scope>NUCLEOTIDE SEQUENCE [LARGE SCALE MRNA]</scope>
    <source>
        <strain>cv. Columbia</strain>
    </source>
</reference>
<reference key="6">
    <citation type="journal article" date="2002" name="Plant Physiol.">
        <title>Arabidopsis contains nine long-chain acyl-coenzyme A synthetase genes that participate in fatty acid and glycerolipid metabolism.</title>
        <authorList>
            <person name="Shockey J.M."/>
            <person name="Fulda M.S."/>
            <person name="Browse J.A."/>
        </authorList>
    </citation>
    <scope>NUCLEOTIDE SEQUENCE [MRNA] OF 19-727</scope>
</reference>
<reference key="7">
    <citation type="submission" date="2005-03" db="EMBL/GenBank/DDBJ databases">
        <title>Large-scale analysis of RIKEN Arabidopsis full-length (RAFL) cDNAs.</title>
        <authorList>
            <person name="Totoki Y."/>
            <person name="Seki M."/>
            <person name="Ishida J."/>
            <person name="Nakajima M."/>
            <person name="Enju A."/>
            <person name="Kamiya A."/>
            <person name="Narusaka M."/>
            <person name="Shin-i T."/>
            <person name="Nakagawa M."/>
            <person name="Sakamoto N."/>
            <person name="Oishi K."/>
            <person name="Kohara Y."/>
            <person name="Kobayashi M."/>
            <person name="Toyoda A."/>
            <person name="Sakaki Y."/>
            <person name="Sakurai T."/>
            <person name="Iida K."/>
            <person name="Akiyama K."/>
            <person name="Satou M."/>
            <person name="Toyoda T."/>
            <person name="Konagaya A."/>
            <person name="Carninci P."/>
            <person name="Kawai J."/>
            <person name="Hayashizaki Y."/>
            <person name="Shinozaki K."/>
        </authorList>
    </citation>
    <scope>NUCLEOTIDE SEQUENCE [LARGE SCALE MRNA] OF 321-727</scope>
    <source>
        <strain>cv. Columbia</strain>
    </source>
</reference>
<reference key="8">
    <citation type="journal article" date="2003" name="Plant Physiol.">
        <title>Arabidopsis contains a large superfamily of acyl-activating enzymes. Phylogenetic and biochemical analysis reveals a new class of acyl-coenzyme a synthetases.</title>
        <authorList>
            <person name="Shockey J.M."/>
            <person name="Fulda M.S."/>
            <person name="Browse J."/>
        </authorList>
    </citation>
    <scope>GENE FAMILY</scope>
    <scope>NOMENCLATURE</scope>
</reference>
<reference key="9">
    <citation type="journal article" date="2009" name="Plant Physiol.">
        <title>Large-scale Arabidopsis phosphoproteome profiling reveals novel chloroplast kinase substrates and phosphorylation networks.</title>
        <authorList>
            <person name="Reiland S."/>
            <person name="Messerli G."/>
            <person name="Baerenfaller K."/>
            <person name="Gerrits B."/>
            <person name="Endler A."/>
            <person name="Grossmann J."/>
            <person name="Gruissem W."/>
            <person name="Baginsky S."/>
        </authorList>
    </citation>
    <scope>IDENTIFICATION BY MASS SPECTROMETRY [LARGE SCALE ANALYSIS]</scope>
</reference>
<comment type="function">
    <text evidence="1">Probably involved in the activation of fatty acids to acyl-carrier-protein prior to fatty acid elongation in plastids. Acts on medium- to long-chain fatty acids.</text>
</comment>
<comment type="catalytic activity">
    <reaction evidence="1">
        <text>a long-chain fatty acid + holo-[ACP] + ATP = a long-chain fatty acyl-[ACP] + AMP + diphosphate</text>
        <dbReference type="Rhea" id="RHEA:45588"/>
        <dbReference type="Rhea" id="RHEA-COMP:9685"/>
        <dbReference type="Rhea" id="RHEA-COMP:12682"/>
        <dbReference type="ChEBI" id="CHEBI:30616"/>
        <dbReference type="ChEBI" id="CHEBI:33019"/>
        <dbReference type="ChEBI" id="CHEBI:57560"/>
        <dbReference type="ChEBI" id="CHEBI:64479"/>
        <dbReference type="ChEBI" id="CHEBI:133243"/>
        <dbReference type="ChEBI" id="CHEBI:456215"/>
        <dbReference type="EC" id="6.2.1.20"/>
    </reaction>
</comment>
<comment type="subcellular location">
    <subcellularLocation>
        <location evidence="2">Plastid</location>
        <location evidence="2">Chloroplast</location>
    </subcellularLocation>
</comment>
<comment type="similarity">
    <text evidence="2">Belongs to the ATP-dependent AMP-binding enzyme family.</text>
</comment>
<comment type="sequence caution" evidence="2">
    <conflict type="erroneous initiation">
        <sequence resource="EMBL-CDS" id="BAD94085"/>
    </conflict>
    <text>Truncated N-terminus.</text>
</comment>
<comment type="sequence caution" evidence="2">
    <conflict type="erroneous gene model prediction">
        <sequence resource="EMBL-CDS" id="CAB10186"/>
    </conflict>
</comment>
<comment type="sequence caution" evidence="2">
    <conflict type="erroneous gene model prediction">
        <sequence resource="EMBL-CDS" id="CAB78449"/>
    </conflict>
</comment>
<sequence length="727" mass="81466">MQIRLKPDYSFFIASSSTMASTSSLGPSTLLSYGSPSRQFPDFGFRLISGHESVRIPSFRRFRVHCESKEKEVKPSSPFLESSSFSGDAALRSSEWKAVPDIWRSSAEKYGDRVALVDPYHDPPLKLTYKQLEQEILDFAEGLRVLGVKADEKIALFADNSCRWLVSDQGIMATGAVNVVRGSRSSVEELLQIYRHSESVAIVVDNPEFFNRIAESFTSKASLRFLILLWGEKSSLVTQGMQIPVYSYAEIINQGQESRAKLSASNDTRSYRNQFIDSDDTAAIMYTSGTTGNPKGVMLTHRNLLHQIKHLSKYVPAQAGDKFLSMLPSWHAYERASEYFIFTCGVEQMYTSIRYLKDDLKRYQPNYIVSVPLVYETLYSGIQKQISASSAGRKFLALTLIKVSMAYMEMKRIYEGMCLTKEQKPPMYIVAFVDWLWARVIAALLWPLHMLAKKLIYKKIHSSIGISKAGISGGGSLPIHVDKFFEAIGVILQNGYGLTETSPVVCARTLSCNVLGSAGHPMHGTEFKIVDPETNNVLPPGSKGIIKVRGPQVMKGYYKNPSTTKQVLNESGWFNTGDTGWIAPHHSKGRSRHCGGVIVLEGRAKDTIVLSTGENVEPLEIEEAAMRSRVIEQIVVIGQDRRRLGAIIIPNKEEAQRVDPETSKETLKSLVYQELRKWTSECSFQVGPVLIVDDPFTIDNGLMTPTMKIRRDMVVAKYKEEIDQLYS</sequence>
<evidence type="ECO:0000269" key="1">
    <source>
    </source>
</evidence>
<evidence type="ECO:0000305" key="2"/>